<name>CTRA_BRUSI</name>
<protein>
    <recommendedName>
        <fullName>Cell cycle response regulator CtrA</fullName>
    </recommendedName>
</protein>
<dbReference type="EMBL" id="CP000911">
    <property type="protein sequence ID" value="ABY38682.1"/>
    <property type="molecule type" value="Genomic_DNA"/>
</dbReference>
<dbReference type="RefSeq" id="WP_002964699.1">
    <property type="nucleotide sequence ID" value="NC_010169.1"/>
</dbReference>
<dbReference type="SMR" id="B0CI76"/>
<dbReference type="GeneID" id="97533230"/>
<dbReference type="KEGG" id="bmt:BSUIS_A1654"/>
<dbReference type="HOGENOM" id="CLU_000445_30_1_5"/>
<dbReference type="Proteomes" id="UP000008545">
    <property type="component" value="Chromosome I"/>
</dbReference>
<dbReference type="GO" id="GO:0005829">
    <property type="term" value="C:cytosol"/>
    <property type="evidence" value="ECO:0007669"/>
    <property type="project" value="TreeGrafter"/>
</dbReference>
<dbReference type="GO" id="GO:0032993">
    <property type="term" value="C:protein-DNA complex"/>
    <property type="evidence" value="ECO:0007669"/>
    <property type="project" value="TreeGrafter"/>
</dbReference>
<dbReference type="GO" id="GO:0000156">
    <property type="term" value="F:phosphorelay response regulator activity"/>
    <property type="evidence" value="ECO:0007669"/>
    <property type="project" value="TreeGrafter"/>
</dbReference>
<dbReference type="GO" id="GO:0000976">
    <property type="term" value="F:transcription cis-regulatory region binding"/>
    <property type="evidence" value="ECO:0007669"/>
    <property type="project" value="TreeGrafter"/>
</dbReference>
<dbReference type="GO" id="GO:0006355">
    <property type="term" value="P:regulation of DNA-templated transcription"/>
    <property type="evidence" value="ECO:0007669"/>
    <property type="project" value="InterPro"/>
</dbReference>
<dbReference type="CDD" id="cd17616">
    <property type="entry name" value="REC_OmpR_CtrA"/>
    <property type="match status" value="1"/>
</dbReference>
<dbReference type="CDD" id="cd00383">
    <property type="entry name" value="trans_reg_C"/>
    <property type="match status" value="1"/>
</dbReference>
<dbReference type="FunFam" id="1.10.10.10:FF:000052">
    <property type="entry name" value="Cell cycle response regulator"/>
    <property type="match status" value="1"/>
</dbReference>
<dbReference type="FunFam" id="3.40.50.2300:FF:000011">
    <property type="entry name" value="Cell cycle response regulator CtrA"/>
    <property type="match status" value="1"/>
</dbReference>
<dbReference type="Gene3D" id="3.40.50.2300">
    <property type="match status" value="1"/>
</dbReference>
<dbReference type="Gene3D" id="6.10.250.690">
    <property type="match status" value="1"/>
</dbReference>
<dbReference type="Gene3D" id="1.10.10.10">
    <property type="entry name" value="Winged helix-like DNA-binding domain superfamily/Winged helix DNA-binding domain"/>
    <property type="match status" value="1"/>
</dbReference>
<dbReference type="InterPro" id="IPR011006">
    <property type="entry name" value="CheY-like_superfamily"/>
</dbReference>
<dbReference type="InterPro" id="IPR001867">
    <property type="entry name" value="OmpR/PhoB-type_DNA-bd"/>
</dbReference>
<dbReference type="InterPro" id="IPR001789">
    <property type="entry name" value="Sig_transdc_resp-reg_receiver"/>
</dbReference>
<dbReference type="InterPro" id="IPR039420">
    <property type="entry name" value="WalR-like"/>
</dbReference>
<dbReference type="InterPro" id="IPR036388">
    <property type="entry name" value="WH-like_DNA-bd_sf"/>
</dbReference>
<dbReference type="NCBIfam" id="NF045991">
    <property type="entry name" value="RespRegCtrARhodob"/>
    <property type="match status" value="1"/>
</dbReference>
<dbReference type="PANTHER" id="PTHR48111">
    <property type="entry name" value="REGULATOR OF RPOS"/>
    <property type="match status" value="1"/>
</dbReference>
<dbReference type="PANTHER" id="PTHR48111:SF22">
    <property type="entry name" value="REGULATOR OF RPOS"/>
    <property type="match status" value="1"/>
</dbReference>
<dbReference type="Pfam" id="PF00072">
    <property type="entry name" value="Response_reg"/>
    <property type="match status" value="1"/>
</dbReference>
<dbReference type="Pfam" id="PF00486">
    <property type="entry name" value="Trans_reg_C"/>
    <property type="match status" value="1"/>
</dbReference>
<dbReference type="SMART" id="SM00448">
    <property type="entry name" value="REC"/>
    <property type="match status" value="1"/>
</dbReference>
<dbReference type="SMART" id="SM00862">
    <property type="entry name" value="Trans_reg_C"/>
    <property type="match status" value="1"/>
</dbReference>
<dbReference type="SUPFAM" id="SSF52172">
    <property type="entry name" value="CheY-like"/>
    <property type="match status" value="1"/>
</dbReference>
<dbReference type="PROSITE" id="PS51755">
    <property type="entry name" value="OMPR_PHOB"/>
    <property type="match status" value="1"/>
</dbReference>
<dbReference type="PROSITE" id="PS50110">
    <property type="entry name" value="RESPONSE_REGULATORY"/>
    <property type="match status" value="1"/>
</dbReference>
<feature type="chain" id="PRO_0000363201" description="Cell cycle response regulator CtrA">
    <location>
        <begin position="1"/>
        <end position="232"/>
    </location>
</feature>
<feature type="domain" description="Response regulatory" evidence="2">
    <location>
        <begin position="2"/>
        <end position="116"/>
    </location>
</feature>
<feature type="DNA-binding region" description="OmpR/PhoB-type" evidence="3">
    <location>
        <begin position="124"/>
        <end position="223"/>
    </location>
</feature>
<feature type="modified residue" description="4-aspartylphosphate" evidence="2">
    <location>
        <position position="51"/>
    </location>
</feature>
<accession>B0CI76</accession>
<reference key="1">
    <citation type="submission" date="2007-12" db="EMBL/GenBank/DDBJ databases">
        <title>Brucella suis ATCC 23445 whole genome shotgun sequencing project.</title>
        <authorList>
            <person name="Setubal J.C."/>
            <person name="Bowns C."/>
            <person name="Boyle S."/>
            <person name="Crasta O.R."/>
            <person name="Czar M.J."/>
            <person name="Dharmanolla C."/>
            <person name="Gillespie J.J."/>
            <person name="Kenyon R.W."/>
            <person name="Lu J."/>
            <person name="Mane S."/>
            <person name="Mohapatra S."/>
            <person name="Nagrani S."/>
            <person name="Purkayastha A."/>
            <person name="Rajasimha H.K."/>
            <person name="Shallom J.M."/>
            <person name="Shallom S."/>
            <person name="Shukla M."/>
            <person name="Snyder E.E."/>
            <person name="Sobral B.W."/>
            <person name="Wattam A.R."/>
            <person name="Will R."/>
            <person name="Williams K."/>
            <person name="Yoo H."/>
            <person name="Bruce D."/>
            <person name="Detter C."/>
            <person name="Munk C."/>
            <person name="Brettin T.S."/>
        </authorList>
    </citation>
    <scope>NUCLEOTIDE SEQUENCE [LARGE SCALE GENOMIC DNA]</scope>
    <source>
        <strain>ATCC 23445 / NCTC 10510</strain>
    </source>
</reference>
<comment type="function">
    <text evidence="1">Essential protein that plays a role in the control of cell division, possibly through the transcriptional regulation of ccrM, rpoD, pleC, minC and ftsZ genes.</text>
</comment>
<comment type="subcellular location">
    <subcellularLocation>
        <location evidence="1">Cytoplasm</location>
    </subcellularLocation>
</comment>
<sequence>MRVLLIEDDSAIAQSIELMLKSESFNVYTTDLGEEGIDLGKLYDYDIILLDLNLPDMSGYEVLRTLRLSKVKTPILILSGMAGIEDKVRGLGFGADDYMTKPFHKDELIARIHAIVRRSKGHAQSVITTGDLVVNLDAKTVEVAGQRVHLTGKEYQMLELLSLRKGTTLTKEMFLNHLYGGMDEPELKIIDVFICKLRKKLDAVSGNQSYIETVWGRGYVLREPDAEMRESA</sequence>
<organism>
    <name type="scientific">Brucella suis (strain ATCC 23445 / NCTC 10510)</name>
    <dbReference type="NCBI Taxonomy" id="470137"/>
    <lineage>
        <taxon>Bacteria</taxon>
        <taxon>Pseudomonadati</taxon>
        <taxon>Pseudomonadota</taxon>
        <taxon>Alphaproteobacteria</taxon>
        <taxon>Hyphomicrobiales</taxon>
        <taxon>Brucellaceae</taxon>
        <taxon>Brucella/Ochrobactrum group</taxon>
        <taxon>Brucella</taxon>
    </lineage>
</organism>
<keyword id="KW-0963">Cytoplasm</keyword>
<keyword id="KW-0238">DNA-binding</keyword>
<keyword id="KW-0597">Phosphoprotein</keyword>
<keyword id="KW-0804">Transcription</keyword>
<keyword id="KW-0805">Transcription regulation</keyword>
<keyword id="KW-0902">Two-component regulatory system</keyword>
<proteinExistence type="inferred from homology"/>
<evidence type="ECO:0000250" key="1"/>
<evidence type="ECO:0000255" key="2">
    <source>
        <dbReference type="PROSITE-ProRule" id="PRU00169"/>
    </source>
</evidence>
<evidence type="ECO:0000255" key="3">
    <source>
        <dbReference type="PROSITE-ProRule" id="PRU01091"/>
    </source>
</evidence>
<gene>
    <name type="primary">ctrA</name>
    <name type="ordered locus">BSUIS_A1654</name>
</gene>